<accession>Q89AM7</accession>
<organism>
    <name type="scientific">Buchnera aphidicola subsp. Baizongia pistaciae (strain Bp)</name>
    <dbReference type="NCBI Taxonomy" id="224915"/>
    <lineage>
        <taxon>Bacteria</taxon>
        <taxon>Pseudomonadati</taxon>
        <taxon>Pseudomonadota</taxon>
        <taxon>Gammaproteobacteria</taxon>
        <taxon>Enterobacterales</taxon>
        <taxon>Erwiniaceae</taxon>
        <taxon>Buchnera</taxon>
    </lineage>
</organism>
<evidence type="ECO:0000255" key="1">
    <source>
        <dbReference type="HAMAP-Rule" id="MF_00367"/>
    </source>
</evidence>
<evidence type="ECO:0000255" key="2">
    <source>
        <dbReference type="PROSITE-ProRule" id="PRU01050"/>
    </source>
</evidence>
<dbReference type="EMBL" id="AE016826">
    <property type="protein sequence ID" value="AAO26965.1"/>
    <property type="molecule type" value="Genomic_DNA"/>
</dbReference>
<dbReference type="RefSeq" id="WP_011091366.1">
    <property type="nucleotide sequence ID" value="NC_004545.1"/>
</dbReference>
<dbReference type="SMR" id="Q89AM7"/>
<dbReference type="STRING" id="224915.bbp_238"/>
<dbReference type="KEGG" id="bab:bbp_238"/>
<dbReference type="eggNOG" id="COG1159">
    <property type="taxonomic scope" value="Bacteria"/>
</dbReference>
<dbReference type="HOGENOM" id="CLU_038009_1_2_6"/>
<dbReference type="Proteomes" id="UP000000601">
    <property type="component" value="Chromosome"/>
</dbReference>
<dbReference type="GO" id="GO:0005829">
    <property type="term" value="C:cytosol"/>
    <property type="evidence" value="ECO:0007669"/>
    <property type="project" value="TreeGrafter"/>
</dbReference>
<dbReference type="GO" id="GO:0005886">
    <property type="term" value="C:plasma membrane"/>
    <property type="evidence" value="ECO:0007669"/>
    <property type="project" value="UniProtKB-SubCell"/>
</dbReference>
<dbReference type="GO" id="GO:0005525">
    <property type="term" value="F:GTP binding"/>
    <property type="evidence" value="ECO:0007669"/>
    <property type="project" value="UniProtKB-UniRule"/>
</dbReference>
<dbReference type="GO" id="GO:0003924">
    <property type="term" value="F:GTPase activity"/>
    <property type="evidence" value="ECO:0007669"/>
    <property type="project" value="UniProtKB-UniRule"/>
</dbReference>
<dbReference type="GO" id="GO:0043024">
    <property type="term" value="F:ribosomal small subunit binding"/>
    <property type="evidence" value="ECO:0007669"/>
    <property type="project" value="TreeGrafter"/>
</dbReference>
<dbReference type="GO" id="GO:0070181">
    <property type="term" value="F:small ribosomal subunit rRNA binding"/>
    <property type="evidence" value="ECO:0007669"/>
    <property type="project" value="UniProtKB-UniRule"/>
</dbReference>
<dbReference type="GO" id="GO:0000028">
    <property type="term" value="P:ribosomal small subunit assembly"/>
    <property type="evidence" value="ECO:0007669"/>
    <property type="project" value="TreeGrafter"/>
</dbReference>
<dbReference type="CDD" id="cd04163">
    <property type="entry name" value="Era"/>
    <property type="match status" value="1"/>
</dbReference>
<dbReference type="CDD" id="cd22534">
    <property type="entry name" value="KH-II_Era"/>
    <property type="match status" value="1"/>
</dbReference>
<dbReference type="Gene3D" id="3.30.300.20">
    <property type="match status" value="1"/>
</dbReference>
<dbReference type="Gene3D" id="3.40.50.300">
    <property type="entry name" value="P-loop containing nucleotide triphosphate hydrolases"/>
    <property type="match status" value="1"/>
</dbReference>
<dbReference type="HAMAP" id="MF_00367">
    <property type="entry name" value="GTPase_Era"/>
    <property type="match status" value="1"/>
</dbReference>
<dbReference type="InterPro" id="IPR030388">
    <property type="entry name" value="G_ERA_dom"/>
</dbReference>
<dbReference type="InterPro" id="IPR006073">
    <property type="entry name" value="GTP-bd"/>
</dbReference>
<dbReference type="InterPro" id="IPR005662">
    <property type="entry name" value="GTPase_Era-like"/>
</dbReference>
<dbReference type="InterPro" id="IPR015946">
    <property type="entry name" value="KH_dom-like_a/b"/>
</dbReference>
<dbReference type="InterPro" id="IPR004044">
    <property type="entry name" value="KH_dom_type_2"/>
</dbReference>
<dbReference type="InterPro" id="IPR009019">
    <property type="entry name" value="KH_sf_prok-type"/>
</dbReference>
<dbReference type="InterPro" id="IPR027417">
    <property type="entry name" value="P-loop_NTPase"/>
</dbReference>
<dbReference type="InterPro" id="IPR005225">
    <property type="entry name" value="Small_GTP-bd"/>
</dbReference>
<dbReference type="NCBIfam" id="TIGR00436">
    <property type="entry name" value="era"/>
    <property type="match status" value="1"/>
</dbReference>
<dbReference type="NCBIfam" id="NF000908">
    <property type="entry name" value="PRK00089.1"/>
    <property type="match status" value="1"/>
</dbReference>
<dbReference type="NCBIfam" id="TIGR00231">
    <property type="entry name" value="small_GTP"/>
    <property type="match status" value="1"/>
</dbReference>
<dbReference type="PANTHER" id="PTHR42698">
    <property type="entry name" value="GTPASE ERA"/>
    <property type="match status" value="1"/>
</dbReference>
<dbReference type="PANTHER" id="PTHR42698:SF1">
    <property type="entry name" value="GTPASE ERA, MITOCHONDRIAL"/>
    <property type="match status" value="1"/>
</dbReference>
<dbReference type="Pfam" id="PF07650">
    <property type="entry name" value="KH_2"/>
    <property type="match status" value="1"/>
</dbReference>
<dbReference type="Pfam" id="PF01926">
    <property type="entry name" value="MMR_HSR1"/>
    <property type="match status" value="1"/>
</dbReference>
<dbReference type="SUPFAM" id="SSF52540">
    <property type="entry name" value="P-loop containing nucleoside triphosphate hydrolases"/>
    <property type="match status" value="1"/>
</dbReference>
<dbReference type="SUPFAM" id="SSF54814">
    <property type="entry name" value="Prokaryotic type KH domain (KH-domain type II)"/>
    <property type="match status" value="1"/>
</dbReference>
<dbReference type="PROSITE" id="PS51713">
    <property type="entry name" value="G_ERA"/>
    <property type="match status" value="1"/>
</dbReference>
<reference key="1">
    <citation type="journal article" date="2003" name="Proc. Natl. Acad. Sci. U.S.A.">
        <title>Reductive genome evolution in Buchnera aphidicola.</title>
        <authorList>
            <person name="van Ham R.C.H.J."/>
            <person name="Kamerbeek J."/>
            <person name="Palacios C."/>
            <person name="Rausell C."/>
            <person name="Abascal F."/>
            <person name="Bastolla U."/>
            <person name="Fernandez J.M."/>
            <person name="Jimenez L."/>
            <person name="Postigo M."/>
            <person name="Silva F.J."/>
            <person name="Tamames J."/>
            <person name="Viguera E."/>
            <person name="Latorre A."/>
            <person name="Valencia A."/>
            <person name="Moran F."/>
            <person name="Moya A."/>
        </authorList>
    </citation>
    <scope>NUCLEOTIDE SEQUENCE [LARGE SCALE GENOMIC DNA]</scope>
    <source>
        <strain>Bp</strain>
    </source>
</reference>
<sequence length="287" mass="32877">MKQKYFSGTSVIIGKPNVGKSTIINKLINSKISIVSKKKHTTQSNITGIMNIGLQHQLIYIDTPGISKKYVYKNQNKTFRNTMALMHSIQFIFLILEKTSWTNEDEYILNIVKKYLKPIFAIINKIDKIKSKEHLLPHILTLSKKHMFQEIIPISGKTGENIHILSKVIQNKLKIVPKPTFPFDLKTNLDIKSIVSEIIREKLILYLGDELPYSIQVSTKNIIDRNIKTSYIEAVISVNNTQHKKIIIGCKGKKIKLCGSLARKALEKFFNKSIYLSLKVIKKNKTL</sequence>
<gene>
    <name evidence="1" type="primary">era</name>
    <name type="ordered locus">bbp_238</name>
</gene>
<proteinExistence type="inferred from homology"/>
<comment type="function">
    <text evidence="1">An essential GTPase that binds both GDP and GTP, with rapid nucleotide exchange. Plays a role in 16S rRNA processing and 30S ribosomal subunit biogenesis and possibly also in cell cycle regulation and energy metabolism.</text>
</comment>
<comment type="subunit">
    <text evidence="1">Monomer.</text>
</comment>
<comment type="subcellular location">
    <subcellularLocation>
        <location>Cytoplasm</location>
    </subcellularLocation>
    <subcellularLocation>
        <location evidence="1">Cell membrane</location>
        <topology evidence="1">Peripheral membrane protein</topology>
    </subcellularLocation>
</comment>
<comment type="similarity">
    <text evidence="1 2">Belongs to the TRAFAC class TrmE-Era-EngA-EngB-Septin-like GTPase superfamily. Era GTPase family.</text>
</comment>
<keyword id="KW-1003">Cell membrane</keyword>
<keyword id="KW-0963">Cytoplasm</keyword>
<keyword id="KW-0342">GTP-binding</keyword>
<keyword id="KW-0472">Membrane</keyword>
<keyword id="KW-0547">Nucleotide-binding</keyword>
<keyword id="KW-1185">Reference proteome</keyword>
<keyword id="KW-0690">Ribosome biogenesis</keyword>
<keyword id="KW-0694">RNA-binding</keyword>
<keyword id="KW-0699">rRNA-binding</keyword>
<feature type="chain" id="PRO_0000180004" description="GTPase Era">
    <location>
        <begin position="1"/>
        <end position="287"/>
    </location>
</feature>
<feature type="domain" description="Era-type G" evidence="2">
    <location>
        <begin position="6"/>
        <end position="178"/>
    </location>
</feature>
<feature type="domain" description="KH type-2" evidence="1">
    <location>
        <begin position="207"/>
        <end position="282"/>
    </location>
</feature>
<feature type="region of interest" description="G1" evidence="2">
    <location>
        <begin position="14"/>
        <end position="21"/>
    </location>
</feature>
<feature type="region of interest" description="G2" evidence="2">
    <location>
        <begin position="40"/>
        <end position="44"/>
    </location>
</feature>
<feature type="region of interest" description="G3" evidence="2">
    <location>
        <begin position="62"/>
        <end position="65"/>
    </location>
</feature>
<feature type="region of interest" description="G4" evidence="2">
    <location>
        <begin position="124"/>
        <end position="127"/>
    </location>
</feature>
<feature type="region of interest" description="G5" evidence="2">
    <location>
        <begin position="154"/>
        <end position="156"/>
    </location>
</feature>
<feature type="binding site" evidence="1">
    <location>
        <begin position="14"/>
        <end position="21"/>
    </location>
    <ligand>
        <name>GTP</name>
        <dbReference type="ChEBI" id="CHEBI:37565"/>
    </ligand>
</feature>
<feature type="binding site" evidence="1">
    <location>
        <begin position="62"/>
        <end position="66"/>
    </location>
    <ligand>
        <name>GTP</name>
        <dbReference type="ChEBI" id="CHEBI:37565"/>
    </ligand>
</feature>
<feature type="binding site" evidence="1">
    <location>
        <begin position="124"/>
        <end position="127"/>
    </location>
    <ligand>
        <name>GTP</name>
        <dbReference type="ChEBI" id="CHEBI:37565"/>
    </ligand>
</feature>
<name>ERA_BUCBP</name>
<protein>
    <recommendedName>
        <fullName evidence="1">GTPase Era</fullName>
    </recommendedName>
</protein>